<accession>P44060</accession>
<evidence type="ECO:0000255" key="1"/>
<evidence type="ECO:0000305" key="2"/>
<organism>
    <name type="scientific">Haemophilus influenzae (strain ATCC 51907 / DSM 11121 / KW20 / Rd)</name>
    <dbReference type="NCBI Taxonomy" id="71421"/>
    <lineage>
        <taxon>Bacteria</taxon>
        <taxon>Pseudomonadati</taxon>
        <taxon>Pseudomonadota</taxon>
        <taxon>Gammaproteobacteria</taxon>
        <taxon>Pasteurellales</taxon>
        <taxon>Pasteurellaceae</taxon>
        <taxon>Haemophilus</taxon>
    </lineage>
</organism>
<feature type="chain" id="PRO_0000077960" description="Uncharacterized protein HI_0850">
    <location>
        <begin position="1"/>
        <end position="144"/>
    </location>
</feature>
<feature type="transmembrane region" description="Helical" evidence="1">
    <location>
        <begin position="76"/>
        <end position="96"/>
    </location>
</feature>
<feature type="transmembrane region" description="Helical" evidence="1">
    <location>
        <begin position="105"/>
        <end position="125"/>
    </location>
</feature>
<protein>
    <recommendedName>
        <fullName>Uncharacterized protein HI_0850</fullName>
    </recommendedName>
</protein>
<reference key="1">
    <citation type="journal article" date="1995" name="Science">
        <title>Whole-genome random sequencing and assembly of Haemophilus influenzae Rd.</title>
        <authorList>
            <person name="Fleischmann R.D."/>
            <person name="Adams M.D."/>
            <person name="White O."/>
            <person name="Clayton R.A."/>
            <person name="Kirkness E.F."/>
            <person name="Kerlavage A.R."/>
            <person name="Bult C.J."/>
            <person name="Tomb J.-F."/>
            <person name="Dougherty B.A."/>
            <person name="Merrick J.M."/>
            <person name="McKenney K."/>
            <person name="Sutton G.G."/>
            <person name="FitzHugh W."/>
            <person name="Fields C.A."/>
            <person name="Gocayne J.D."/>
            <person name="Scott J.D."/>
            <person name="Shirley R."/>
            <person name="Liu L.-I."/>
            <person name="Glodek A."/>
            <person name="Kelley J.M."/>
            <person name="Weidman J.F."/>
            <person name="Phillips C.A."/>
            <person name="Spriggs T."/>
            <person name="Hedblom E."/>
            <person name="Cotton M.D."/>
            <person name="Utterback T.R."/>
            <person name="Hanna M.C."/>
            <person name="Nguyen D.T."/>
            <person name="Saudek D.M."/>
            <person name="Brandon R.C."/>
            <person name="Fine L.D."/>
            <person name="Fritchman J.L."/>
            <person name="Fuhrmann J.L."/>
            <person name="Geoghagen N.S.M."/>
            <person name="Gnehm C.L."/>
            <person name="McDonald L.A."/>
            <person name="Small K.V."/>
            <person name="Fraser C.M."/>
            <person name="Smith H.O."/>
            <person name="Venter J.C."/>
        </authorList>
    </citation>
    <scope>NUCLEOTIDE SEQUENCE [LARGE SCALE GENOMIC DNA]</scope>
    <source>
        <strain>ATCC 51907 / DSM 11121 / KW20 / Rd</strain>
    </source>
</reference>
<gene>
    <name type="ordered locus">HI_0850</name>
</gene>
<comment type="subcellular location">
    <subcellularLocation>
        <location evidence="2">Cell inner membrane</location>
        <topology evidence="2">Multi-pass membrane protein</topology>
    </subcellularLocation>
</comment>
<comment type="similarity">
    <text evidence="2">Belongs to the RseC family.</text>
</comment>
<dbReference type="EMBL" id="L42023">
    <property type="protein sequence ID" value="AAC22507.1"/>
    <property type="molecule type" value="Genomic_DNA"/>
</dbReference>
<dbReference type="PIR" id="F64014">
    <property type="entry name" value="F64014"/>
</dbReference>
<dbReference type="RefSeq" id="NP_439010.1">
    <property type="nucleotide sequence ID" value="NC_000907.1"/>
</dbReference>
<dbReference type="STRING" id="71421.HI_0850"/>
<dbReference type="EnsemblBacteria" id="AAC22507">
    <property type="protein sequence ID" value="AAC22507"/>
    <property type="gene ID" value="HI_0850"/>
</dbReference>
<dbReference type="KEGG" id="hin:HI_0850"/>
<dbReference type="PATRIC" id="fig|71421.8.peg.891"/>
<dbReference type="eggNOG" id="COG3086">
    <property type="taxonomic scope" value="Bacteria"/>
</dbReference>
<dbReference type="HOGENOM" id="CLU_124911_0_0_6"/>
<dbReference type="OrthoDB" id="9795854at2"/>
<dbReference type="PhylomeDB" id="P44060"/>
<dbReference type="BioCyc" id="HINF71421:G1GJ1-890-MONOMER"/>
<dbReference type="Proteomes" id="UP000000579">
    <property type="component" value="Chromosome"/>
</dbReference>
<dbReference type="GO" id="GO:1990204">
    <property type="term" value="C:oxidoreductase complex"/>
    <property type="evidence" value="ECO:0000318"/>
    <property type="project" value="GO_Central"/>
</dbReference>
<dbReference type="GO" id="GO:0005886">
    <property type="term" value="C:plasma membrane"/>
    <property type="evidence" value="ECO:0000318"/>
    <property type="project" value="GO_Central"/>
</dbReference>
<dbReference type="InterPro" id="IPR026268">
    <property type="entry name" value="RseC"/>
</dbReference>
<dbReference type="InterPro" id="IPR007359">
    <property type="entry name" value="SigmaE_reg_RseC_MucC"/>
</dbReference>
<dbReference type="PANTHER" id="PTHR35867">
    <property type="entry name" value="PROTEIN RSEC"/>
    <property type="match status" value="1"/>
</dbReference>
<dbReference type="PANTHER" id="PTHR35867:SF1">
    <property type="entry name" value="PROTEIN RSEC"/>
    <property type="match status" value="1"/>
</dbReference>
<dbReference type="Pfam" id="PF04246">
    <property type="entry name" value="RseC_MucC"/>
    <property type="match status" value="1"/>
</dbReference>
<dbReference type="PIRSF" id="PIRSF004923">
    <property type="entry name" value="RseC"/>
    <property type="match status" value="1"/>
</dbReference>
<name>Y850_HAEIN</name>
<keyword id="KW-0997">Cell inner membrane</keyword>
<keyword id="KW-1003">Cell membrane</keyword>
<keyword id="KW-0472">Membrane</keyword>
<keyword id="KW-1185">Reference proteome</keyword>
<keyword id="KW-0812">Transmembrane</keyword>
<keyword id="KW-1133">Transmembrane helix</keyword>
<sequence>MLRESAVVISYENGIAKVKCQSQSACGQCAAKNSCGTSSLSELNGKRGEHIFNVETLMPLREGQIVEIGLEEKSMLLSALLMYVVPLLTLLIVTMLSDYISDNEILRAILIFGLTALSFILVKSYSRKLGQQTEFQPVLLRVLS</sequence>
<proteinExistence type="inferred from homology"/>